<feature type="chain" id="PRO_0000191255" description="Secretory carrier-associated membrane protein 2">
    <location>
        <begin position="1"/>
        <end position="329"/>
    </location>
</feature>
<feature type="topological domain" description="Cytoplasmic" evidence="3">
    <location>
        <begin position="1"/>
        <end position="153"/>
    </location>
</feature>
<feature type="transmembrane region" description="Helical" evidence="3">
    <location>
        <begin position="154"/>
        <end position="174"/>
    </location>
</feature>
<feature type="topological domain" description="Lumenal" evidence="3">
    <location>
        <begin position="175"/>
        <end position="181"/>
    </location>
</feature>
<feature type="transmembrane region" description="Helical" evidence="3">
    <location>
        <begin position="182"/>
        <end position="202"/>
    </location>
</feature>
<feature type="topological domain" description="Cytoplasmic" evidence="3">
    <location>
        <begin position="203"/>
        <end position="218"/>
    </location>
</feature>
<feature type="transmembrane region" description="Helical" evidence="3">
    <location>
        <begin position="219"/>
        <end position="239"/>
    </location>
</feature>
<feature type="topological domain" description="Lumenal" evidence="3">
    <location>
        <begin position="240"/>
        <end position="262"/>
    </location>
</feature>
<feature type="transmembrane region" description="Helical" evidence="3">
    <location>
        <begin position="263"/>
        <end position="283"/>
    </location>
</feature>
<feature type="topological domain" description="Cytoplasmic" evidence="3">
    <location>
        <begin position="284"/>
        <end position="329"/>
    </location>
</feature>
<feature type="region of interest" description="Disordered" evidence="4">
    <location>
        <begin position="1"/>
        <end position="74"/>
    </location>
</feature>
<feature type="region of interest" description="Interaction with SLC9A7" evidence="1">
    <location>
        <begin position="203"/>
        <end position="218"/>
    </location>
</feature>
<feature type="compositionally biased region" description="Polar residues" evidence="4">
    <location>
        <begin position="19"/>
        <end position="31"/>
    </location>
</feature>
<feature type="compositionally biased region" description="Polar residues" evidence="4">
    <location>
        <begin position="40"/>
        <end position="51"/>
    </location>
</feature>
<feature type="modified residue" description="Phosphoserine" evidence="2">
    <location>
        <position position="319"/>
    </location>
</feature>
<feature type="modified residue" description="Phosphoserine" evidence="2">
    <location>
        <position position="320"/>
    </location>
</feature>
<keyword id="KW-0967">Endosome</keyword>
<keyword id="KW-0333">Golgi apparatus</keyword>
<keyword id="KW-0472">Membrane</keyword>
<keyword id="KW-0597">Phosphoprotein</keyword>
<keyword id="KW-0653">Protein transport</keyword>
<keyword id="KW-1185">Reference proteome</keyword>
<keyword id="KW-0812">Transmembrane</keyword>
<keyword id="KW-1133">Transmembrane helix</keyword>
<keyword id="KW-0813">Transport</keyword>
<comment type="function">
    <text evidence="1">Functions in post-Golgi recycling pathways. Acts as a recycling carrier to the cell surface (By similarity).</text>
</comment>
<comment type="subunit">
    <text evidence="2">Interacts with SLC6A4 and SLC9A7. Interacts with SLC9A5; this interaction regulates SLC9A5 cell-surface targeting and SLC9A5 activity.</text>
</comment>
<comment type="subcellular location">
    <subcellularLocation>
        <location evidence="1">Golgi apparatus</location>
        <location evidence="1">trans-Golgi network membrane</location>
        <topology evidence="1">Multi-pass membrane protein</topology>
    </subcellularLocation>
    <subcellularLocation>
        <location evidence="1">Recycling endosome membrane</location>
        <topology evidence="1">Multi-pass membrane protein</topology>
    </subcellularLocation>
</comment>
<comment type="similarity">
    <text evidence="5">Belongs to the SCAMP family.</text>
</comment>
<sequence>MSAFDTNPFADPVDVNPFQDPSVTQLTNAPQSGLAEFNPFSETNAATTVPATQAPGPSQPAVLQPSVEPAQPTPQAVAAAAQAGLLRQQEELDRKAAELERKERELQNTAANLHVRDNNWPPLPSWCPVKPCFYQDFSTEIPADYQRICKMLYYLWMLHSVTLFLNLLACLAWFTSDAANGTAFGLSILWFLIFTPCAFLCWYRPIYKAFRSDNSFSFFVFFFVFFCQIGIYFIQLIGLPNLGTSGWLAALSTMKNGPLAVTIIMMVVAGFFTLCAGLSLFLLQRVHAFYRRTGASFQQAQEEFSQGIFSSRTFRGAASSAARGAFQGN</sequence>
<reference key="1">
    <citation type="journal article" date="2000" name="J. Neurosci.">
        <title>Novel SCAMPs lacking NPF repeats: ubiquitous and synaptic vesicle-specific forms implicate SCAMPs in multiple membrane-trafficking functions.</title>
        <authorList>
            <person name="Fernandez-Chacon R."/>
            <person name="Suedhof T.C."/>
        </authorList>
    </citation>
    <scope>NUCLEOTIDE SEQUENCE [MRNA]</scope>
</reference>
<reference key="2">
    <citation type="journal article" date="2004" name="Genome Res.">
        <title>The status, quality, and expansion of the NIH full-length cDNA project: the Mammalian Gene Collection (MGC).</title>
        <authorList>
            <consortium name="The MGC Project Team"/>
        </authorList>
    </citation>
    <scope>NUCLEOTIDE SEQUENCE [LARGE SCALE MRNA]</scope>
    <source>
        <tissue>Kidney</tissue>
    </source>
</reference>
<reference key="3">
    <citation type="journal article" date="2010" name="Cell">
        <title>A tissue-specific atlas of mouse protein phosphorylation and expression.</title>
        <authorList>
            <person name="Huttlin E.L."/>
            <person name="Jedrychowski M.P."/>
            <person name="Elias J.E."/>
            <person name="Goswami T."/>
            <person name="Rad R."/>
            <person name="Beausoleil S.A."/>
            <person name="Villen J."/>
            <person name="Haas W."/>
            <person name="Sowa M.E."/>
            <person name="Gygi S.P."/>
        </authorList>
    </citation>
    <scope>IDENTIFICATION BY MASS SPECTROMETRY [LARGE SCALE ANALYSIS]</scope>
    <source>
        <tissue>Brain</tissue>
        <tissue>Brown adipose tissue</tissue>
        <tissue>Heart</tissue>
        <tissue>Kidney</tissue>
        <tissue>Liver</tissue>
        <tissue>Lung</tissue>
        <tissue>Pancreas</tissue>
        <tissue>Spleen</tissue>
        <tissue>Testis</tissue>
    </source>
</reference>
<protein>
    <recommendedName>
        <fullName>Secretory carrier-associated membrane protein 2</fullName>
        <shortName>Secretory carrier membrane protein 2</shortName>
    </recommendedName>
</protein>
<accession>Q9ERN0</accession>
<name>SCAM2_MOUSE</name>
<dbReference type="EMBL" id="AF295402">
    <property type="protein sequence ID" value="AAG22799.1"/>
    <property type="molecule type" value="mRNA"/>
</dbReference>
<dbReference type="EMBL" id="BC014751">
    <property type="protein sequence ID" value="AAH14751.1"/>
    <property type="molecule type" value="mRNA"/>
</dbReference>
<dbReference type="CCDS" id="CCDS23224.1"/>
<dbReference type="RefSeq" id="NP_073724.1">
    <property type="nucleotide sequence ID" value="NM_022813.3"/>
</dbReference>
<dbReference type="SMR" id="Q9ERN0"/>
<dbReference type="BioGRID" id="204859">
    <property type="interactions" value="2"/>
</dbReference>
<dbReference type="FunCoup" id="Q9ERN0">
    <property type="interactions" value="2611"/>
</dbReference>
<dbReference type="STRING" id="10090.ENSMUSP00000038350"/>
<dbReference type="GlyGen" id="Q9ERN0">
    <property type="glycosylation" value="1 site"/>
</dbReference>
<dbReference type="iPTMnet" id="Q9ERN0"/>
<dbReference type="PhosphoSitePlus" id="Q9ERN0"/>
<dbReference type="SwissPalm" id="Q9ERN0"/>
<dbReference type="jPOST" id="Q9ERN0"/>
<dbReference type="PaxDb" id="10090-ENSMUSP00000038350"/>
<dbReference type="ProteomicsDB" id="253404"/>
<dbReference type="Pumba" id="Q9ERN0"/>
<dbReference type="Antibodypedia" id="14704">
    <property type="antibodies" value="293 antibodies from 26 providers"/>
</dbReference>
<dbReference type="DNASU" id="24044"/>
<dbReference type="Ensembl" id="ENSMUST00000045791.11">
    <property type="protein sequence ID" value="ENSMUSP00000038350.10"/>
    <property type="gene ID" value="ENSMUSG00000040188.11"/>
</dbReference>
<dbReference type="GeneID" id="24044"/>
<dbReference type="KEGG" id="mmu:24044"/>
<dbReference type="UCSC" id="uc009pve.2">
    <property type="organism name" value="mouse"/>
</dbReference>
<dbReference type="AGR" id="MGI:1346518"/>
<dbReference type="CTD" id="10066"/>
<dbReference type="MGI" id="MGI:1346518">
    <property type="gene designation" value="Scamp2"/>
</dbReference>
<dbReference type="VEuPathDB" id="HostDB:ENSMUSG00000040188"/>
<dbReference type="eggNOG" id="KOG3088">
    <property type="taxonomic scope" value="Eukaryota"/>
</dbReference>
<dbReference type="GeneTree" id="ENSGT00940000156476"/>
<dbReference type="HOGENOM" id="CLU_066546_0_0_1"/>
<dbReference type="InParanoid" id="Q9ERN0"/>
<dbReference type="OMA" id="CLAWFTG"/>
<dbReference type="OrthoDB" id="242866at2759"/>
<dbReference type="PhylomeDB" id="Q9ERN0"/>
<dbReference type="TreeFam" id="TF313797"/>
<dbReference type="BioGRID-ORCS" id="24044">
    <property type="hits" value="4 hits in 77 CRISPR screens"/>
</dbReference>
<dbReference type="ChiTaRS" id="Scamp2">
    <property type="organism name" value="mouse"/>
</dbReference>
<dbReference type="PRO" id="PR:Q9ERN0"/>
<dbReference type="Proteomes" id="UP000000589">
    <property type="component" value="Chromosome 9"/>
</dbReference>
<dbReference type="RNAct" id="Q9ERN0">
    <property type="molecule type" value="protein"/>
</dbReference>
<dbReference type="Bgee" id="ENSMUSG00000040188">
    <property type="expression patterns" value="Expressed in spermatid and 261 other cell types or tissues"/>
</dbReference>
<dbReference type="ExpressionAtlas" id="Q9ERN0">
    <property type="expression patterns" value="baseline and differential"/>
</dbReference>
<dbReference type="GO" id="GO:0016020">
    <property type="term" value="C:membrane"/>
    <property type="evidence" value="ECO:0000250"/>
    <property type="project" value="UniProtKB"/>
</dbReference>
<dbReference type="GO" id="GO:0055038">
    <property type="term" value="C:recycling endosome membrane"/>
    <property type="evidence" value="ECO:0000250"/>
    <property type="project" value="UniProtKB"/>
</dbReference>
<dbReference type="GO" id="GO:0032588">
    <property type="term" value="C:trans-Golgi network membrane"/>
    <property type="evidence" value="ECO:0000250"/>
    <property type="project" value="UniProtKB"/>
</dbReference>
<dbReference type="GO" id="GO:0015031">
    <property type="term" value="P:protein transport"/>
    <property type="evidence" value="ECO:0000250"/>
    <property type="project" value="UniProtKB"/>
</dbReference>
<dbReference type="InterPro" id="IPR007273">
    <property type="entry name" value="SCAMP"/>
</dbReference>
<dbReference type="PANTHER" id="PTHR10687:SF7">
    <property type="entry name" value="SECRETORY CARRIER-ASSOCIATED MEMBRANE PROTEIN 2"/>
    <property type="match status" value="1"/>
</dbReference>
<dbReference type="PANTHER" id="PTHR10687">
    <property type="entry name" value="SECRETORY CARRIER-ASSOCIATED MEMBRANE PROTEIN SCAMP"/>
    <property type="match status" value="1"/>
</dbReference>
<dbReference type="Pfam" id="PF04144">
    <property type="entry name" value="SCAMP"/>
    <property type="match status" value="1"/>
</dbReference>
<gene>
    <name type="primary">Scamp2</name>
</gene>
<proteinExistence type="evidence at protein level"/>
<evidence type="ECO:0000250" key="1"/>
<evidence type="ECO:0000250" key="2">
    <source>
        <dbReference type="UniProtKB" id="O15127"/>
    </source>
</evidence>
<evidence type="ECO:0000255" key="3"/>
<evidence type="ECO:0000256" key="4">
    <source>
        <dbReference type="SAM" id="MobiDB-lite"/>
    </source>
</evidence>
<evidence type="ECO:0000305" key="5"/>
<organism>
    <name type="scientific">Mus musculus</name>
    <name type="common">Mouse</name>
    <dbReference type="NCBI Taxonomy" id="10090"/>
    <lineage>
        <taxon>Eukaryota</taxon>
        <taxon>Metazoa</taxon>
        <taxon>Chordata</taxon>
        <taxon>Craniata</taxon>
        <taxon>Vertebrata</taxon>
        <taxon>Euteleostomi</taxon>
        <taxon>Mammalia</taxon>
        <taxon>Eutheria</taxon>
        <taxon>Euarchontoglires</taxon>
        <taxon>Glires</taxon>
        <taxon>Rodentia</taxon>
        <taxon>Myomorpha</taxon>
        <taxon>Muroidea</taxon>
        <taxon>Muridae</taxon>
        <taxon>Murinae</taxon>
        <taxon>Mus</taxon>
        <taxon>Mus</taxon>
    </lineage>
</organism>